<gene>
    <name evidence="1" type="primary">gcvPA</name>
    <name type="ordered locus">BCE_4304</name>
</gene>
<accession>Q730W2</accession>
<dbReference type="EC" id="1.4.4.2" evidence="1"/>
<dbReference type="EMBL" id="AE017194">
    <property type="protein sequence ID" value="AAS43205.1"/>
    <property type="molecule type" value="Genomic_DNA"/>
</dbReference>
<dbReference type="SMR" id="Q730W2"/>
<dbReference type="KEGG" id="bca:BCE_4304"/>
<dbReference type="HOGENOM" id="CLU_004620_0_2_9"/>
<dbReference type="Proteomes" id="UP000002527">
    <property type="component" value="Chromosome"/>
</dbReference>
<dbReference type="GO" id="GO:0004375">
    <property type="term" value="F:glycine dehydrogenase (decarboxylating) activity"/>
    <property type="evidence" value="ECO:0007669"/>
    <property type="project" value="UniProtKB-EC"/>
</dbReference>
<dbReference type="GO" id="GO:0019464">
    <property type="term" value="P:glycine decarboxylation via glycine cleavage system"/>
    <property type="evidence" value="ECO:0007669"/>
    <property type="project" value="UniProtKB-UniRule"/>
</dbReference>
<dbReference type="GO" id="GO:0009116">
    <property type="term" value="P:nucleoside metabolic process"/>
    <property type="evidence" value="ECO:0007669"/>
    <property type="project" value="InterPro"/>
</dbReference>
<dbReference type="CDD" id="cd00613">
    <property type="entry name" value="GDC-P"/>
    <property type="match status" value="1"/>
</dbReference>
<dbReference type="FunFam" id="3.40.640.10:FF:000113">
    <property type="entry name" value="Probable glycine dehydrogenase (decarboxylating) subunit 1"/>
    <property type="match status" value="1"/>
</dbReference>
<dbReference type="Gene3D" id="3.90.1150.10">
    <property type="entry name" value="Aspartate Aminotransferase, domain 1"/>
    <property type="match status" value="1"/>
</dbReference>
<dbReference type="Gene3D" id="3.40.640.10">
    <property type="entry name" value="Type I PLP-dependent aspartate aminotransferase-like (Major domain)"/>
    <property type="match status" value="1"/>
</dbReference>
<dbReference type="HAMAP" id="MF_00712">
    <property type="entry name" value="GcvPA"/>
    <property type="match status" value="1"/>
</dbReference>
<dbReference type="InterPro" id="IPR023010">
    <property type="entry name" value="GcvPA"/>
</dbReference>
<dbReference type="InterPro" id="IPR049315">
    <property type="entry name" value="GDC-P_N"/>
</dbReference>
<dbReference type="InterPro" id="IPR020581">
    <property type="entry name" value="GDC_P"/>
</dbReference>
<dbReference type="InterPro" id="IPR015424">
    <property type="entry name" value="PyrdxlP-dep_Trfase"/>
</dbReference>
<dbReference type="InterPro" id="IPR015421">
    <property type="entry name" value="PyrdxlP-dep_Trfase_major"/>
</dbReference>
<dbReference type="InterPro" id="IPR015422">
    <property type="entry name" value="PyrdxlP-dep_Trfase_small"/>
</dbReference>
<dbReference type="NCBIfam" id="NF001696">
    <property type="entry name" value="PRK00451.1"/>
    <property type="match status" value="1"/>
</dbReference>
<dbReference type="PANTHER" id="PTHR42806">
    <property type="entry name" value="GLYCINE CLEAVAGE SYSTEM P-PROTEIN"/>
    <property type="match status" value="1"/>
</dbReference>
<dbReference type="PANTHER" id="PTHR42806:SF1">
    <property type="entry name" value="GLYCINE DEHYDROGENASE (DECARBOXYLATING)"/>
    <property type="match status" value="1"/>
</dbReference>
<dbReference type="Pfam" id="PF02347">
    <property type="entry name" value="GDC-P"/>
    <property type="match status" value="1"/>
</dbReference>
<dbReference type="PIRSF" id="PIRSF006815">
    <property type="entry name" value="GcvPA"/>
    <property type="match status" value="1"/>
</dbReference>
<dbReference type="SUPFAM" id="SSF53383">
    <property type="entry name" value="PLP-dependent transferases"/>
    <property type="match status" value="1"/>
</dbReference>
<keyword id="KW-0560">Oxidoreductase</keyword>
<protein>
    <recommendedName>
        <fullName evidence="1">Probable glycine dehydrogenase (decarboxylating) subunit 1</fullName>
        <ecNumber evidence="1">1.4.4.2</ecNumber>
    </recommendedName>
    <alternativeName>
        <fullName evidence="1">Glycine cleavage system P-protein subunit 1</fullName>
    </alternativeName>
    <alternativeName>
        <fullName evidence="1">Glycine decarboxylase subunit 1</fullName>
    </alternativeName>
    <alternativeName>
        <fullName evidence="1">Glycine dehydrogenase (aminomethyl-transferring) subunit 1</fullName>
    </alternativeName>
</protein>
<sequence>MLHRYLPMTEEDKKEMLQTIGVQTIDELFSDIPESVRFKGDLKIKEAKSESELLKELSQMASKNANLKEYASFLGAGVYDHYAPVIVDHVISRSEFYTAYTPYQPEISQGELQAIFEFQTMICELTGMDVANSSMYDGGTALAEAAMLAAGHTRKKKILVSSAVHPESRAVLETYAKGQHLEVVEINHKDGVTDLDVLQSEVDDTVACVIVQYPNFFGQVEKLADIEKIVHQQKSLFIVSSNPLSLGALTPPGKFGADIVIGDAQPFGIPTQFGGPHCGYFATTKAFMRKIPGRLVGQTVDSDGKRGFVLTLQAREQHIRRDKATSNICSNQALNALAASVAMTALGKQGVKEMARQNISKAQYAKRQFEAKGFTVTFAGPFFNEFVVDCKRPVKEVNDALLQKNIIGGYDLGRDYKEHENHMLVAVTELRTKEEIDTLVNEMGAIQ</sequence>
<name>GCSPA_BACC1</name>
<reference key="1">
    <citation type="journal article" date="2004" name="Nucleic Acids Res.">
        <title>The genome sequence of Bacillus cereus ATCC 10987 reveals metabolic adaptations and a large plasmid related to Bacillus anthracis pXO1.</title>
        <authorList>
            <person name="Rasko D.A."/>
            <person name="Ravel J."/>
            <person name="Oekstad O.A."/>
            <person name="Helgason E."/>
            <person name="Cer R.Z."/>
            <person name="Jiang L."/>
            <person name="Shores K.A."/>
            <person name="Fouts D.E."/>
            <person name="Tourasse N.J."/>
            <person name="Angiuoli S.V."/>
            <person name="Kolonay J.F."/>
            <person name="Nelson W.C."/>
            <person name="Kolstoe A.-B."/>
            <person name="Fraser C.M."/>
            <person name="Read T.D."/>
        </authorList>
    </citation>
    <scope>NUCLEOTIDE SEQUENCE [LARGE SCALE GENOMIC DNA]</scope>
    <source>
        <strain>ATCC 10987 / NRS 248</strain>
    </source>
</reference>
<organism>
    <name type="scientific">Bacillus cereus (strain ATCC 10987 / NRS 248)</name>
    <dbReference type="NCBI Taxonomy" id="222523"/>
    <lineage>
        <taxon>Bacteria</taxon>
        <taxon>Bacillati</taxon>
        <taxon>Bacillota</taxon>
        <taxon>Bacilli</taxon>
        <taxon>Bacillales</taxon>
        <taxon>Bacillaceae</taxon>
        <taxon>Bacillus</taxon>
        <taxon>Bacillus cereus group</taxon>
    </lineage>
</organism>
<proteinExistence type="inferred from homology"/>
<evidence type="ECO:0000255" key="1">
    <source>
        <dbReference type="HAMAP-Rule" id="MF_00712"/>
    </source>
</evidence>
<comment type="function">
    <text evidence="1">The glycine cleavage system catalyzes the degradation of glycine. The P protein binds the alpha-amino group of glycine through its pyridoxal phosphate cofactor; CO(2) is released and the remaining methylamine moiety is then transferred to the lipoamide cofactor of the H protein.</text>
</comment>
<comment type="catalytic activity">
    <reaction evidence="1">
        <text>N(6)-[(R)-lipoyl]-L-lysyl-[glycine-cleavage complex H protein] + glycine + H(+) = N(6)-[(R)-S(8)-aminomethyldihydrolipoyl]-L-lysyl-[glycine-cleavage complex H protein] + CO2</text>
        <dbReference type="Rhea" id="RHEA:24304"/>
        <dbReference type="Rhea" id="RHEA-COMP:10494"/>
        <dbReference type="Rhea" id="RHEA-COMP:10495"/>
        <dbReference type="ChEBI" id="CHEBI:15378"/>
        <dbReference type="ChEBI" id="CHEBI:16526"/>
        <dbReference type="ChEBI" id="CHEBI:57305"/>
        <dbReference type="ChEBI" id="CHEBI:83099"/>
        <dbReference type="ChEBI" id="CHEBI:83143"/>
        <dbReference type="EC" id="1.4.4.2"/>
    </reaction>
</comment>
<comment type="subunit">
    <text evidence="1">The glycine cleavage system is composed of four proteins: P, T, L and H. In this organism, the P 'protein' is a heterodimer of two subunits.</text>
</comment>
<comment type="similarity">
    <text evidence="1">Belongs to the GcvP family. N-terminal subunit subfamily.</text>
</comment>
<feature type="chain" id="PRO_0000166955" description="Probable glycine dehydrogenase (decarboxylating) subunit 1">
    <location>
        <begin position="1"/>
        <end position="447"/>
    </location>
</feature>